<keyword id="KW-0418">Kinase</keyword>
<keyword id="KW-0547">Nucleotide-binding</keyword>
<keyword id="KW-1185">Reference proteome</keyword>
<keyword id="KW-0723">Serine/threonine-protein kinase</keyword>
<keyword id="KW-0808">Transferase</keyword>
<evidence type="ECO:0000255" key="1">
    <source>
        <dbReference type="HAMAP-Rule" id="MF_01062"/>
    </source>
</evidence>
<protein>
    <recommendedName>
        <fullName evidence="1">Putative phosphoenolpyruvate synthase regulatory protein</fullName>
        <shortName evidence="1">PEP synthase regulatory protein</shortName>
        <shortName evidence="1">PSRP</shortName>
        <ecNumber evidence="1">2.7.11.33</ecNumber>
        <ecNumber evidence="1">2.7.4.28</ecNumber>
    </recommendedName>
    <alternativeName>
        <fullName evidence="1">Pyruvate, water dikinase regulatory protein</fullName>
    </alternativeName>
</protein>
<feature type="chain" id="PRO_1000136459" description="Putative phosphoenolpyruvate synthase regulatory protein">
    <location>
        <begin position="1"/>
        <end position="271"/>
    </location>
</feature>
<feature type="binding site" evidence="1">
    <location>
        <begin position="151"/>
        <end position="158"/>
    </location>
    <ligand>
        <name>ADP</name>
        <dbReference type="ChEBI" id="CHEBI:456216"/>
    </ligand>
</feature>
<sequence>MLPTVFIVSDGTGITAETFAHSILSQFDQKFRLVRVPFVDSLEKAYATVEKINEAAVHDGRRSIVFTTLVDSESNEIVKRSNALVLDMFQRFVEPLEQELQLKSSHAMGRGHQNADTEEYKTRIEAINFSLAHDDGQSNRNLSEADVILVGVSRSGKTPTSLYLAMQYGVKAANYPLIPEDFERGKLPSALAPHRDKLFGLSIDPQRLSEIRNERRPGSKYAAPENCRYEINEAEAMMRREGIKWLSSTHKSIEEIATTILQEIRLERQSY</sequence>
<reference key="1">
    <citation type="submission" date="2007-10" db="EMBL/GenBank/DDBJ databases">
        <title>Complete sequence of chromosome 1 of Burkholderia multivorans ATCC 17616.</title>
        <authorList>
            <person name="Copeland A."/>
            <person name="Lucas S."/>
            <person name="Lapidus A."/>
            <person name="Barry K."/>
            <person name="Glavina del Rio T."/>
            <person name="Dalin E."/>
            <person name="Tice H."/>
            <person name="Pitluck S."/>
            <person name="Chain P."/>
            <person name="Malfatti S."/>
            <person name="Shin M."/>
            <person name="Vergez L."/>
            <person name="Schmutz J."/>
            <person name="Larimer F."/>
            <person name="Land M."/>
            <person name="Hauser L."/>
            <person name="Kyrpides N."/>
            <person name="Kim E."/>
            <person name="Tiedje J."/>
            <person name="Richardson P."/>
        </authorList>
    </citation>
    <scope>NUCLEOTIDE SEQUENCE [LARGE SCALE GENOMIC DNA]</scope>
    <source>
        <strain>ATCC 17616 / 249</strain>
    </source>
</reference>
<reference key="2">
    <citation type="submission" date="2007-04" db="EMBL/GenBank/DDBJ databases">
        <title>Complete genome sequence of Burkholderia multivorans ATCC 17616.</title>
        <authorList>
            <person name="Ohtsubo Y."/>
            <person name="Yamashita A."/>
            <person name="Kurokawa K."/>
            <person name="Takami H."/>
            <person name="Yuhara S."/>
            <person name="Nishiyama E."/>
            <person name="Endo R."/>
            <person name="Miyazaki R."/>
            <person name="Ono A."/>
            <person name="Yano K."/>
            <person name="Ito M."/>
            <person name="Sota M."/>
            <person name="Yuji N."/>
            <person name="Hattori M."/>
            <person name="Tsuda M."/>
        </authorList>
    </citation>
    <scope>NUCLEOTIDE SEQUENCE [LARGE SCALE GENOMIC DNA]</scope>
    <source>
        <strain>ATCC 17616 / 249</strain>
    </source>
</reference>
<accession>A9AIN0</accession>
<organism>
    <name type="scientific">Burkholderia multivorans (strain ATCC 17616 / 249)</name>
    <dbReference type="NCBI Taxonomy" id="395019"/>
    <lineage>
        <taxon>Bacteria</taxon>
        <taxon>Pseudomonadati</taxon>
        <taxon>Pseudomonadota</taxon>
        <taxon>Betaproteobacteria</taxon>
        <taxon>Burkholderiales</taxon>
        <taxon>Burkholderiaceae</taxon>
        <taxon>Burkholderia</taxon>
        <taxon>Burkholderia cepacia complex</taxon>
    </lineage>
</organism>
<gene>
    <name type="ordered locus">Bmul_1273</name>
    <name type="ordered locus">BMULJ_01974</name>
</gene>
<name>PSRP_BURM1</name>
<dbReference type="EC" id="2.7.11.33" evidence="1"/>
<dbReference type="EC" id="2.7.4.28" evidence="1"/>
<dbReference type="EMBL" id="CP000868">
    <property type="protein sequence ID" value="ABX14961.1"/>
    <property type="molecule type" value="Genomic_DNA"/>
</dbReference>
<dbReference type="EMBL" id="AP009385">
    <property type="protein sequence ID" value="BAG43891.1"/>
    <property type="molecule type" value="Genomic_DNA"/>
</dbReference>
<dbReference type="RefSeq" id="WP_012213143.1">
    <property type="nucleotide sequence ID" value="NC_010084.1"/>
</dbReference>
<dbReference type="SMR" id="A9AIN0"/>
<dbReference type="STRING" id="395019.BMULJ_01974"/>
<dbReference type="KEGG" id="bmj:BMULJ_01974"/>
<dbReference type="KEGG" id="bmu:Bmul_1273"/>
<dbReference type="eggNOG" id="COG1806">
    <property type="taxonomic scope" value="Bacteria"/>
</dbReference>
<dbReference type="HOGENOM" id="CLU_046206_1_0_4"/>
<dbReference type="Proteomes" id="UP000008815">
    <property type="component" value="Chromosome 1"/>
</dbReference>
<dbReference type="GO" id="GO:0043531">
    <property type="term" value="F:ADP binding"/>
    <property type="evidence" value="ECO:0007669"/>
    <property type="project" value="UniProtKB-UniRule"/>
</dbReference>
<dbReference type="GO" id="GO:0005524">
    <property type="term" value="F:ATP binding"/>
    <property type="evidence" value="ECO:0007669"/>
    <property type="project" value="InterPro"/>
</dbReference>
<dbReference type="GO" id="GO:0016776">
    <property type="term" value="F:phosphotransferase activity, phosphate group as acceptor"/>
    <property type="evidence" value="ECO:0007669"/>
    <property type="project" value="UniProtKB-UniRule"/>
</dbReference>
<dbReference type="GO" id="GO:0004674">
    <property type="term" value="F:protein serine/threonine kinase activity"/>
    <property type="evidence" value="ECO:0007669"/>
    <property type="project" value="UniProtKB-UniRule"/>
</dbReference>
<dbReference type="HAMAP" id="MF_01062">
    <property type="entry name" value="PSRP"/>
    <property type="match status" value="1"/>
</dbReference>
<dbReference type="InterPro" id="IPR005177">
    <property type="entry name" value="Kinase-pyrophosphorylase"/>
</dbReference>
<dbReference type="InterPro" id="IPR026530">
    <property type="entry name" value="PSRP"/>
</dbReference>
<dbReference type="NCBIfam" id="NF003742">
    <property type="entry name" value="PRK05339.1"/>
    <property type="match status" value="1"/>
</dbReference>
<dbReference type="PANTHER" id="PTHR31756">
    <property type="entry name" value="PYRUVATE, PHOSPHATE DIKINASE REGULATORY PROTEIN 1, CHLOROPLASTIC"/>
    <property type="match status" value="1"/>
</dbReference>
<dbReference type="PANTHER" id="PTHR31756:SF3">
    <property type="entry name" value="PYRUVATE, PHOSPHATE DIKINASE REGULATORY PROTEIN 1, CHLOROPLASTIC"/>
    <property type="match status" value="1"/>
</dbReference>
<dbReference type="Pfam" id="PF03618">
    <property type="entry name" value="Kinase-PPPase"/>
    <property type="match status" value="1"/>
</dbReference>
<proteinExistence type="inferred from homology"/>
<comment type="function">
    <text evidence="1">Bifunctional serine/threonine kinase and phosphorylase involved in the regulation of the phosphoenolpyruvate synthase (PEPS) by catalyzing its phosphorylation/dephosphorylation.</text>
</comment>
<comment type="catalytic activity">
    <reaction evidence="1">
        <text>[pyruvate, water dikinase] + ADP = [pyruvate, water dikinase]-phosphate + AMP + H(+)</text>
        <dbReference type="Rhea" id="RHEA:46020"/>
        <dbReference type="Rhea" id="RHEA-COMP:11425"/>
        <dbReference type="Rhea" id="RHEA-COMP:11426"/>
        <dbReference type="ChEBI" id="CHEBI:15378"/>
        <dbReference type="ChEBI" id="CHEBI:43176"/>
        <dbReference type="ChEBI" id="CHEBI:68546"/>
        <dbReference type="ChEBI" id="CHEBI:456215"/>
        <dbReference type="ChEBI" id="CHEBI:456216"/>
        <dbReference type="EC" id="2.7.11.33"/>
    </reaction>
</comment>
<comment type="catalytic activity">
    <reaction evidence="1">
        <text>[pyruvate, water dikinase]-phosphate + phosphate + H(+) = [pyruvate, water dikinase] + diphosphate</text>
        <dbReference type="Rhea" id="RHEA:48580"/>
        <dbReference type="Rhea" id="RHEA-COMP:11425"/>
        <dbReference type="Rhea" id="RHEA-COMP:11426"/>
        <dbReference type="ChEBI" id="CHEBI:15378"/>
        <dbReference type="ChEBI" id="CHEBI:33019"/>
        <dbReference type="ChEBI" id="CHEBI:43176"/>
        <dbReference type="ChEBI" id="CHEBI:43474"/>
        <dbReference type="ChEBI" id="CHEBI:68546"/>
        <dbReference type="EC" id="2.7.4.28"/>
    </reaction>
</comment>
<comment type="similarity">
    <text evidence="1">Belongs to the pyruvate, phosphate/water dikinase regulatory protein family. PSRP subfamily.</text>
</comment>